<feature type="signal peptide" evidence="1">
    <location>
        <begin position="1"/>
        <end position="24"/>
    </location>
</feature>
<feature type="chain" id="PRO_0000401159" description="Serpin A3-5" evidence="3">
    <location>
        <begin position="25"/>
        <end position="411"/>
    </location>
</feature>
<feature type="site" description="Reactive bond" evidence="2">
    <location>
        <begin position="377"/>
        <end position="378"/>
    </location>
</feature>
<feature type="glycosylation site" description="N-linked (GlcNAc...) asparagine" evidence="3">
    <location>
        <position position="100"/>
    </location>
</feature>
<feature type="glycosylation site" description="N-linked (GlcNAc...) asparagine" evidence="3">
    <location>
        <position position="180"/>
    </location>
</feature>
<feature type="glycosylation site" description="N-linked (GlcNAc...) asparagine" evidence="3">
    <location>
        <position position="230"/>
    </location>
</feature>
<feature type="glycosylation site" description="N-linked (GlcNAc...) asparagine" evidence="3">
    <location>
        <position position="264"/>
    </location>
</feature>
<feature type="glycosylation site" description="N-linked (GlcNAc...) asparagine" evidence="3">
    <location>
        <position position="318"/>
    </location>
</feature>
<proteinExistence type="inferred from homology"/>
<protein>
    <recommendedName>
        <fullName>Serpin A3-5</fullName>
    </recommendedName>
</protein>
<organism>
    <name type="scientific">Bos taurus</name>
    <name type="common">Bovine</name>
    <dbReference type="NCBI Taxonomy" id="9913"/>
    <lineage>
        <taxon>Eukaryota</taxon>
        <taxon>Metazoa</taxon>
        <taxon>Chordata</taxon>
        <taxon>Craniata</taxon>
        <taxon>Vertebrata</taxon>
        <taxon>Euteleostomi</taxon>
        <taxon>Mammalia</taxon>
        <taxon>Eutheria</taxon>
        <taxon>Laurasiatheria</taxon>
        <taxon>Artiodactyla</taxon>
        <taxon>Ruminantia</taxon>
        <taxon>Pecora</taxon>
        <taxon>Bovidae</taxon>
        <taxon>Bovinae</taxon>
        <taxon>Bos</taxon>
    </lineage>
</organism>
<accession>A2I7N1</accession>
<sequence>MRAERTSFLLALGLLMAGIRSVHCLPENVVVKDQRRRVDSHTLASSNTDFAFSLYKQLALKNPNKNVMFSPLSVSMALAFLSLGARGPTLTEILEGLKFNLTEIQETQIHQGFQHLLQALNRPSNQLQLSVGNAMFVQEELKLLDKFIEDARVLYSSEAFPTNFRDSEAARSLINDYVKNKTQGKIEELFKYLSPRTVLVLVNYIYFKAQWKTRFDPKHTEQAEFHVSKNKTVEVPMMTLDLETPYFRDKELGCMLVELTYSSNDSALFILPDEGKMQDLEAKLTPETLTRWRNSLQPRRIHELYLPKFSIKSNYELNDTLSQMGIKKIFTDADLSGITGTADLVVSQVVHGAALDVDEEGTEGAAATGIGIERTFLRIIVRVNRPFLIAVVLKDTQSIIFLGKVTNPSEA</sequence>
<comment type="function">
    <text evidence="2">Serine protease inhibitor.</text>
</comment>
<comment type="subunit">
    <text evidence="2">Homodimer.</text>
</comment>
<comment type="subcellular location">
    <subcellularLocation>
        <location evidence="2">Cytoplasmic vesicle</location>
        <location evidence="2">Secretory vesicle</location>
        <location evidence="2">Chromaffin granule</location>
    </subcellularLocation>
    <subcellularLocation>
        <location evidence="2">Secreted</location>
    </subcellularLocation>
</comment>
<comment type="similarity">
    <text evidence="3">Belongs to the serpin family.</text>
</comment>
<gene>
    <name evidence="4" type="primary">SERPINA3-5</name>
</gene>
<name>SPA35_BOVIN</name>
<keyword id="KW-0968">Cytoplasmic vesicle</keyword>
<keyword id="KW-0325">Glycoprotein</keyword>
<keyword id="KW-0646">Protease inhibitor</keyword>
<keyword id="KW-1185">Reference proteome</keyword>
<keyword id="KW-0964">Secreted</keyword>
<keyword id="KW-0722">Serine protease inhibitor</keyword>
<keyword id="KW-0732">Signal</keyword>
<dbReference type="EMBL" id="EF153628">
    <property type="protein sequence ID" value="ABM55498.1"/>
    <property type="molecule type" value="Genomic_DNA"/>
</dbReference>
<dbReference type="RefSeq" id="NP_001075213.1">
    <property type="nucleotide sequence ID" value="NM_001081744.1"/>
</dbReference>
<dbReference type="SMR" id="A2I7N1"/>
<dbReference type="FunCoup" id="A2I7N1">
    <property type="interactions" value="124"/>
</dbReference>
<dbReference type="MEROPS" id="I04.027"/>
<dbReference type="GlyCosmos" id="A2I7N1">
    <property type="glycosylation" value="5 sites, No reported glycans"/>
</dbReference>
<dbReference type="GlyGen" id="A2I7N1">
    <property type="glycosylation" value="5 sites"/>
</dbReference>
<dbReference type="PaxDb" id="9913-ENSBTAP00000009264"/>
<dbReference type="PeptideAtlas" id="A2I7N1"/>
<dbReference type="GeneID" id="617667"/>
<dbReference type="CTD" id="12"/>
<dbReference type="eggNOG" id="KOG2392">
    <property type="taxonomic scope" value="Eukaryota"/>
</dbReference>
<dbReference type="InParanoid" id="A2I7N1"/>
<dbReference type="OrthoDB" id="671595at2759"/>
<dbReference type="Proteomes" id="UP000009136">
    <property type="component" value="Unplaced"/>
</dbReference>
<dbReference type="GO" id="GO:0042583">
    <property type="term" value="C:chromaffin granule"/>
    <property type="evidence" value="ECO:0007669"/>
    <property type="project" value="UniProtKB-SubCell"/>
</dbReference>
<dbReference type="GO" id="GO:0031410">
    <property type="term" value="C:cytoplasmic vesicle"/>
    <property type="evidence" value="ECO:0000250"/>
    <property type="project" value="UniProtKB"/>
</dbReference>
<dbReference type="GO" id="GO:0005615">
    <property type="term" value="C:extracellular space"/>
    <property type="evidence" value="ECO:0000250"/>
    <property type="project" value="UniProtKB"/>
</dbReference>
<dbReference type="GO" id="GO:0004867">
    <property type="term" value="F:serine-type endopeptidase inhibitor activity"/>
    <property type="evidence" value="ECO:0000250"/>
    <property type="project" value="UniProtKB"/>
</dbReference>
<dbReference type="CDD" id="cd19551">
    <property type="entry name" value="serpinA3_A1AC"/>
    <property type="match status" value="1"/>
</dbReference>
<dbReference type="FunFam" id="3.30.497.10:FF:000001">
    <property type="entry name" value="Serine protease inhibitor"/>
    <property type="match status" value="1"/>
</dbReference>
<dbReference type="FunFam" id="2.30.39.10:FF:000002">
    <property type="entry name" value="Serpin family D member 1"/>
    <property type="match status" value="1"/>
</dbReference>
<dbReference type="Gene3D" id="2.30.39.10">
    <property type="entry name" value="Alpha-1-antitrypsin, domain 1"/>
    <property type="match status" value="1"/>
</dbReference>
<dbReference type="Gene3D" id="3.30.497.10">
    <property type="entry name" value="Antithrombin, subunit I, domain 2"/>
    <property type="match status" value="1"/>
</dbReference>
<dbReference type="InterPro" id="IPR023795">
    <property type="entry name" value="Serpin_CS"/>
</dbReference>
<dbReference type="InterPro" id="IPR023796">
    <property type="entry name" value="Serpin_dom"/>
</dbReference>
<dbReference type="InterPro" id="IPR000215">
    <property type="entry name" value="Serpin_fam"/>
</dbReference>
<dbReference type="InterPro" id="IPR036186">
    <property type="entry name" value="Serpin_sf"/>
</dbReference>
<dbReference type="InterPro" id="IPR042178">
    <property type="entry name" value="Serpin_sf_1"/>
</dbReference>
<dbReference type="InterPro" id="IPR042185">
    <property type="entry name" value="Serpin_sf_2"/>
</dbReference>
<dbReference type="PANTHER" id="PTHR11461:SF145">
    <property type="entry name" value="ALPHA-1-ANTICHYMOTRYPSIN"/>
    <property type="match status" value="1"/>
</dbReference>
<dbReference type="PANTHER" id="PTHR11461">
    <property type="entry name" value="SERINE PROTEASE INHIBITOR, SERPIN"/>
    <property type="match status" value="1"/>
</dbReference>
<dbReference type="Pfam" id="PF00079">
    <property type="entry name" value="Serpin"/>
    <property type="match status" value="1"/>
</dbReference>
<dbReference type="SMART" id="SM00093">
    <property type="entry name" value="SERPIN"/>
    <property type="match status" value="1"/>
</dbReference>
<dbReference type="SUPFAM" id="SSF56574">
    <property type="entry name" value="Serpins"/>
    <property type="match status" value="1"/>
</dbReference>
<dbReference type="PROSITE" id="PS00284">
    <property type="entry name" value="SERPIN"/>
    <property type="match status" value="1"/>
</dbReference>
<evidence type="ECO:0000250" key="1"/>
<evidence type="ECO:0000250" key="2">
    <source>
        <dbReference type="UniProtKB" id="Q9TTE1"/>
    </source>
</evidence>
<evidence type="ECO:0000255" key="3"/>
<evidence type="ECO:0000312" key="4">
    <source>
        <dbReference type="EMBL" id="ABM55498.1"/>
    </source>
</evidence>
<reference key="1">
    <citation type="journal article" date="2008" name="BMC Genomics">
        <title>An original SERPINA3 gene cluster: elucidation of genomic organization and gene expression in the Bos taurus 21q24 region.</title>
        <authorList>
            <person name="Pelissier P."/>
            <person name="Delourme D."/>
            <person name="Germot A."/>
            <person name="Blanchet X."/>
            <person name="Becila S."/>
            <person name="Maftah A."/>
            <person name="Leveziel H."/>
            <person name="Ouali A."/>
            <person name="Bremaud L."/>
        </authorList>
    </citation>
    <scope>NUCLEOTIDE SEQUENCE [GENOMIC DNA]</scope>
    <scope>NOMENCLATURE</scope>
</reference>